<sequence length="340" mass="35885">MGAPHFGPGGVQVGALLLLGFAGLVSGLSLEPVYWNSANKRFQAEGGYVLYPQIGDRLDLLCPRARPPGPHSSPSYEFYKLYLVEGAQGRRCEAPPAPNLLLTCDRPDLDLRFTIKFQEYSPNLWGHEFRSHHDYYIIATSDGTREGLESLQGGVCLTRGMKVLLRVGQSPRGGAVPRKPVSEMPMERDRGAAHSAEPGRDTIPGDPSSNATSRGAEGPLPPPSMPAVAGAAGGMALLLLGVAGAGGAMCWRRRRAKPSESRHPGPGSFGRGGSLGLGGGGGMGPREAEPGELGIALRGGGTADPPFCPHYEKVSGDYGHPVYIVQDGPPQSPPNIYYKV</sequence>
<name>EFNB3_MOUSE</name>
<gene>
    <name type="primary">Efnb3</name>
</gene>
<reference key="1">
    <citation type="journal article" date="1998" name="Oncogene">
        <title>Ephrin-B3, a ligand for the receptor EphB3, expressed at the midline of the developing neural tube.</title>
        <authorList>
            <person name="Bergemann A.D."/>
            <person name="Zhang L."/>
            <person name="Chiang M.-K."/>
            <person name="Brambilla R."/>
            <person name="Klein R."/>
            <person name="Flanagan J.G."/>
        </authorList>
    </citation>
    <scope>NUCLEOTIDE SEQUENCE [MRNA]</scope>
    <scope>TISSUE SPECIFICITY</scope>
    <scope>DEVELOPMENTAL STAGE</scope>
    <source>
        <tissue>Brain</tissue>
    </source>
</reference>
<reference key="2">
    <citation type="journal article" date="2004" name="Genome Res.">
        <title>The status, quality, and expansion of the NIH full-length cDNA project: the Mammalian Gene Collection (MGC).</title>
        <authorList>
            <consortium name="The MGC Project Team"/>
        </authorList>
    </citation>
    <scope>NUCLEOTIDE SEQUENCE [LARGE SCALE MRNA]</scope>
    <source>
        <strain>C57BL/6J</strain>
        <tissue>Brain</tissue>
    </source>
</reference>
<reference key="3">
    <citation type="journal article" date="2000" name="Development">
        <title>Complementary expression of transmembrane ephrins and their receptors in the mouse spinal cord: a possible role in constraining the orientation of longitudinally projecting axons.</title>
        <authorList>
            <person name="Imondi R."/>
            <person name="Wideman C."/>
            <person name="Kaprielian Z."/>
        </authorList>
    </citation>
    <scope>FUNCTION</scope>
    <scope>DEVELOPMENTAL STAGE</scope>
    <scope>TISSUE SPECIFICITY</scope>
</reference>
<reference key="4">
    <citation type="journal article" date="2009" name="Nat. Biotechnol.">
        <title>Mass-spectrometric identification and relative quantification of N-linked cell surface glycoproteins.</title>
        <authorList>
            <person name="Wollscheid B."/>
            <person name="Bausch-Fluck D."/>
            <person name="Henderson C."/>
            <person name="O'Brien R."/>
            <person name="Bibel M."/>
            <person name="Schiess R."/>
            <person name="Aebersold R."/>
            <person name="Watts J.D."/>
        </authorList>
    </citation>
    <scope>GLYCOSYLATION [LARGE SCALE ANALYSIS] AT ASN-210</scope>
</reference>
<reference key="5">
    <citation type="journal article" date="2010" name="Cell">
        <title>A tissue-specific atlas of mouse protein phosphorylation and expression.</title>
        <authorList>
            <person name="Huttlin E.L."/>
            <person name="Jedrychowski M.P."/>
            <person name="Elias J.E."/>
            <person name="Goswami T."/>
            <person name="Rad R."/>
            <person name="Beausoleil S.A."/>
            <person name="Villen J."/>
            <person name="Haas W."/>
            <person name="Sowa M.E."/>
            <person name="Gygi S.P."/>
        </authorList>
    </citation>
    <scope>IDENTIFICATION BY MASS SPECTROMETRY [LARGE SCALE ANALYSIS]</scope>
    <source>
        <tissue>Brain</tissue>
    </source>
</reference>
<reference key="6">
    <citation type="journal article" date="2014" name="Mol. Cell. Proteomics">
        <title>Immunoaffinity enrichment and mass spectrometry analysis of protein methylation.</title>
        <authorList>
            <person name="Guo A."/>
            <person name="Gu H."/>
            <person name="Zhou J."/>
            <person name="Mulhern D."/>
            <person name="Wang Y."/>
            <person name="Lee K.A."/>
            <person name="Yang V."/>
            <person name="Aguiar M."/>
            <person name="Kornhauser J."/>
            <person name="Jia X."/>
            <person name="Ren J."/>
            <person name="Beausoleil S.A."/>
            <person name="Silva J.C."/>
            <person name="Vemulapalli V."/>
            <person name="Bedford M.T."/>
            <person name="Comb M.J."/>
        </authorList>
    </citation>
    <scope>METHYLATION [LARGE SCALE ANALYSIS] AT ARG-271</scope>
    <scope>IDENTIFICATION BY MASS SPECTROMETRY [LARGE SCALE ANALYSIS]</scope>
    <source>
        <tissue>Brain</tissue>
    </source>
</reference>
<reference key="7">
    <citation type="journal article" date="2016" name="Front. Cell Dev. Biol.">
        <title>Gene expression profiling of muscle stem cells identifies novel regulators of postnatal myogenesis.</title>
        <authorList>
            <person name="Alonso-Martin S."/>
            <person name="Rochat A."/>
            <person name="Mademtzoglou D."/>
            <person name="Morais J."/>
            <person name="de Reynies A."/>
            <person name="Aurade F."/>
            <person name="Chang T.H."/>
            <person name="Zammit P.S."/>
            <person name="Relaix F."/>
        </authorList>
    </citation>
    <scope>DEVELOPMENTAL STAGE</scope>
    <scope>TISSUE SPECIFICITY</scope>
</reference>
<comment type="function">
    <text evidence="6">Cell surface transmembrane ligand for Eph receptors, a family of receptor tyrosine kinases which are crucial for migration, repulsion and adhesion during neuronal, vascular and epithelial development. Binds promiscuously Eph receptors residing on adjacent cells, leading to contact-dependent bidirectional signaling into neighboring cells. The signaling pathway downstream of the receptor is referred to as forward signaling while the signaling pathway downstream of the ephrin ligand is referred to as reverse signaling. May play a pivotal role in forebrain function. Binds to, and induce the collapse of, commissural axons/growth cones in vitro. May play a role in constraining the orientation of longitudinally projecting axons.</text>
</comment>
<comment type="subunit">
    <text evidence="1">Interacts with GRIP1 and GRIP2.</text>
</comment>
<comment type="interaction">
    <interactant intactId="EBI-8668154">
        <id>O35393</id>
    </interactant>
    <interactant intactId="EBI-15716439">
        <id>Q4VCP5</id>
        <label>G</label>
    </interactant>
    <organismsDiffer>true</organismsDiffer>
    <experiments>5</experiments>
</comment>
<comment type="subcellular location">
    <subcellularLocation>
        <location>Membrane</location>
        <topology>Single-pass type I membrane protein</topology>
    </subcellularLocation>
</comment>
<comment type="tissue specificity">
    <text evidence="6 8 9">Expressed on lateral floor plate cells, specifically on commissural axon segments that have passed through the floor plate. Expressed in cells of the retinal ganglion cell layer during retinal axon guidance to the optic disk (PubMed:10704386, PubMed:9484836). Expressed in myogenic progenitor cells (PubMed:27446912).</text>
</comment>
<comment type="developmental stage">
    <text evidence="6 8 9">Expressed in the floor plate throughout the period of commissural axon pathfinding (PubMed:10704386, PubMed:9484836). In myogenic progenitor cells, highly expressed during early development (11.5 dpc) and progressively repressed as developments proceeds (PubMed:27446912).</text>
</comment>
<comment type="similarity">
    <text evidence="4">Belongs to the ephrin family.</text>
</comment>
<feature type="signal peptide" evidence="3">
    <location>
        <begin position="1"/>
        <end position="27"/>
    </location>
</feature>
<feature type="chain" id="PRO_0000008396" description="Ephrin-B3">
    <location>
        <begin position="28"/>
        <end position="340"/>
    </location>
</feature>
<feature type="topological domain" description="Extracellular" evidence="3">
    <location>
        <begin position="28"/>
        <end position="227"/>
    </location>
</feature>
<feature type="transmembrane region" description="Helical" evidence="3">
    <location>
        <begin position="228"/>
        <end position="248"/>
    </location>
</feature>
<feature type="topological domain" description="Cytoplasmic" evidence="3">
    <location>
        <begin position="249"/>
        <end position="340"/>
    </location>
</feature>
<feature type="domain" description="Ephrin RBD" evidence="4">
    <location>
        <begin position="28"/>
        <end position="167"/>
    </location>
</feature>
<feature type="region of interest" description="Disordered" evidence="5">
    <location>
        <begin position="168"/>
        <end position="227"/>
    </location>
</feature>
<feature type="region of interest" description="Disordered" evidence="5">
    <location>
        <begin position="254"/>
        <end position="300"/>
    </location>
</feature>
<feature type="short sequence motif" description="PDZ-binding" evidence="3">
    <location>
        <begin position="338"/>
        <end position="340"/>
    </location>
</feature>
<feature type="compositionally biased region" description="Basic and acidic residues" evidence="5">
    <location>
        <begin position="185"/>
        <end position="200"/>
    </location>
</feature>
<feature type="compositionally biased region" description="Gly residues" evidence="5">
    <location>
        <begin position="267"/>
        <end position="284"/>
    </location>
</feature>
<feature type="modified residue" description="Omega-N-methylarginine" evidence="10">
    <location>
        <position position="271"/>
    </location>
</feature>
<feature type="modified residue" description="Phosphoserine" evidence="2">
    <location>
        <position position="274"/>
    </location>
</feature>
<feature type="glycosylation site" description="N-linked (GlcNAc...) asparagine" evidence="7">
    <location>
        <position position="210"/>
    </location>
</feature>
<feature type="disulfide bond" evidence="4">
    <location>
        <begin position="62"/>
        <end position="104"/>
    </location>
</feature>
<feature type="disulfide bond" evidence="4">
    <location>
        <begin position="92"/>
        <end position="156"/>
    </location>
</feature>
<feature type="strand" evidence="11">
    <location>
        <begin position="44"/>
        <end position="46"/>
    </location>
</feature>
<feature type="strand" evidence="11">
    <location>
        <begin position="57"/>
        <end position="62"/>
    </location>
</feature>
<feature type="strand" evidence="11">
    <location>
        <begin position="80"/>
        <end position="84"/>
    </location>
</feature>
<feature type="helix" evidence="11">
    <location>
        <begin position="87"/>
        <end position="90"/>
    </location>
</feature>
<feature type="strand" evidence="11">
    <location>
        <begin position="99"/>
        <end position="103"/>
    </location>
</feature>
<feature type="strand" evidence="11">
    <location>
        <begin position="107"/>
        <end position="109"/>
    </location>
</feature>
<feature type="strand" evidence="11">
    <location>
        <begin position="111"/>
        <end position="119"/>
    </location>
</feature>
<feature type="strand" evidence="11">
    <location>
        <begin position="134"/>
        <end position="139"/>
    </location>
</feature>
<feature type="turn" evidence="11">
    <location>
        <begin position="145"/>
        <end position="149"/>
    </location>
</feature>
<feature type="helix" evidence="11">
    <location>
        <begin position="155"/>
        <end position="158"/>
    </location>
</feature>
<feature type="strand" evidence="11">
    <location>
        <begin position="162"/>
        <end position="166"/>
    </location>
</feature>
<dbReference type="EMBL" id="AF025288">
    <property type="protein sequence ID" value="AAC53537.1"/>
    <property type="molecule type" value="mRNA"/>
</dbReference>
<dbReference type="EMBL" id="BC052001">
    <property type="protein sequence ID" value="AAH52001.1"/>
    <property type="molecule type" value="mRNA"/>
</dbReference>
<dbReference type="EMBL" id="BC058617">
    <property type="protein sequence ID" value="AAH58617.1"/>
    <property type="molecule type" value="mRNA"/>
</dbReference>
<dbReference type="CCDS" id="CCDS24896.1"/>
<dbReference type="RefSeq" id="NP_031937.1">
    <property type="nucleotide sequence ID" value="NM_007911.5"/>
</dbReference>
<dbReference type="PDB" id="3D12">
    <property type="method" value="X-ray"/>
    <property type="resolution" value="3.00 A"/>
    <property type="chains" value="B/E=29-169"/>
</dbReference>
<dbReference type="PDBsum" id="3D12"/>
<dbReference type="SMR" id="O35393"/>
<dbReference type="BioGRID" id="199396">
    <property type="interactions" value="5"/>
</dbReference>
<dbReference type="DIP" id="DIP-44833N"/>
<dbReference type="FunCoup" id="O35393">
    <property type="interactions" value="203"/>
</dbReference>
<dbReference type="IntAct" id="O35393">
    <property type="interactions" value="6"/>
</dbReference>
<dbReference type="MINT" id="O35393"/>
<dbReference type="STRING" id="10090.ENSMUSP00000004036"/>
<dbReference type="GlyCosmos" id="O35393">
    <property type="glycosylation" value="1 site, No reported glycans"/>
</dbReference>
<dbReference type="GlyGen" id="O35393">
    <property type="glycosylation" value="1 site, 1 N-linked glycan (1 site)"/>
</dbReference>
<dbReference type="iPTMnet" id="O35393"/>
<dbReference type="PhosphoSitePlus" id="O35393"/>
<dbReference type="SwissPalm" id="O35393"/>
<dbReference type="PaxDb" id="10090-ENSMUSP00000004036"/>
<dbReference type="PeptideAtlas" id="O35393"/>
<dbReference type="ProteomicsDB" id="275443"/>
<dbReference type="Antibodypedia" id="644">
    <property type="antibodies" value="294 antibodies from 30 providers"/>
</dbReference>
<dbReference type="DNASU" id="13643"/>
<dbReference type="Ensembl" id="ENSMUST00000004036.6">
    <property type="protein sequence ID" value="ENSMUSP00000004036.6"/>
    <property type="gene ID" value="ENSMUSG00000003934.6"/>
</dbReference>
<dbReference type="GeneID" id="13643"/>
<dbReference type="KEGG" id="mmu:13643"/>
<dbReference type="UCSC" id="uc007jqi.2">
    <property type="organism name" value="mouse"/>
</dbReference>
<dbReference type="AGR" id="MGI:109196"/>
<dbReference type="CTD" id="1949"/>
<dbReference type="MGI" id="MGI:109196">
    <property type="gene designation" value="Efnb3"/>
</dbReference>
<dbReference type="VEuPathDB" id="HostDB:ENSMUSG00000003934"/>
<dbReference type="eggNOG" id="KOG3858">
    <property type="taxonomic scope" value="Eukaryota"/>
</dbReference>
<dbReference type="GeneTree" id="ENSGT00940000160323"/>
<dbReference type="HOGENOM" id="CLU_072080_0_0_1"/>
<dbReference type="InParanoid" id="O35393"/>
<dbReference type="OMA" id="IYWNSMN"/>
<dbReference type="OrthoDB" id="6250301at2759"/>
<dbReference type="PhylomeDB" id="O35393"/>
<dbReference type="Reactome" id="R-MMU-2682334">
    <property type="pathway name" value="EPH-Ephrin signaling"/>
</dbReference>
<dbReference type="Reactome" id="R-MMU-3928662">
    <property type="pathway name" value="EPHB-mediated forward signaling"/>
</dbReference>
<dbReference type="Reactome" id="R-MMU-3928664">
    <property type="pathway name" value="Ephrin signaling"/>
</dbReference>
<dbReference type="Reactome" id="R-MMU-3928665">
    <property type="pathway name" value="EPH-ephrin mediated repulsion of cells"/>
</dbReference>
<dbReference type="BioGRID-ORCS" id="13643">
    <property type="hits" value="2 hits in 76 CRISPR screens"/>
</dbReference>
<dbReference type="ChiTaRS" id="Efnb3">
    <property type="organism name" value="mouse"/>
</dbReference>
<dbReference type="EvolutionaryTrace" id="O35393"/>
<dbReference type="PRO" id="PR:O35393"/>
<dbReference type="Proteomes" id="UP000000589">
    <property type="component" value="Chromosome 11"/>
</dbReference>
<dbReference type="RNAct" id="O35393">
    <property type="molecule type" value="protein"/>
</dbReference>
<dbReference type="Bgee" id="ENSMUSG00000003934">
    <property type="expression patterns" value="Expressed in embryonic brain and 223 other cell types or tissues"/>
</dbReference>
<dbReference type="ExpressionAtlas" id="O35393">
    <property type="expression patterns" value="baseline and differential"/>
</dbReference>
<dbReference type="GO" id="GO:0098978">
    <property type="term" value="C:glutamatergic synapse"/>
    <property type="evidence" value="ECO:0000314"/>
    <property type="project" value="SynGO"/>
</dbReference>
<dbReference type="GO" id="GO:0098686">
    <property type="term" value="C:hippocampal mossy fiber to CA3 synapse"/>
    <property type="evidence" value="ECO:0000314"/>
    <property type="project" value="SynGO"/>
</dbReference>
<dbReference type="GO" id="GO:0042734">
    <property type="term" value="C:presynaptic membrane"/>
    <property type="evidence" value="ECO:0000314"/>
    <property type="project" value="SynGO"/>
</dbReference>
<dbReference type="GO" id="GO:0046875">
    <property type="term" value="F:ephrin receptor binding"/>
    <property type="evidence" value="ECO:0000266"/>
    <property type="project" value="MGI"/>
</dbReference>
<dbReference type="GO" id="GO:0007628">
    <property type="term" value="P:adult walking behavior"/>
    <property type="evidence" value="ECO:0000315"/>
    <property type="project" value="MGI"/>
</dbReference>
<dbReference type="GO" id="GO:0016198">
    <property type="term" value="P:axon choice point recognition"/>
    <property type="evidence" value="ECO:0000315"/>
    <property type="project" value="MGI"/>
</dbReference>
<dbReference type="GO" id="GO:0007411">
    <property type="term" value="P:axon guidance"/>
    <property type="evidence" value="ECO:0000315"/>
    <property type="project" value="MGI"/>
</dbReference>
<dbReference type="GO" id="GO:0048013">
    <property type="term" value="P:ephrin receptor signaling pathway"/>
    <property type="evidence" value="ECO:0000266"/>
    <property type="project" value="MGI"/>
</dbReference>
<dbReference type="GO" id="GO:0050771">
    <property type="term" value="P:negative regulation of axonogenesis"/>
    <property type="evidence" value="ECO:0000314"/>
    <property type="project" value="ARUK-UCL"/>
</dbReference>
<dbReference type="GO" id="GO:0031295">
    <property type="term" value="P:T cell costimulation"/>
    <property type="evidence" value="ECO:0000314"/>
    <property type="project" value="MGI"/>
</dbReference>
<dbReference type="GO" id="GO:0099557">
    <property type="term" value="P:trans-synaptic signaling by trans-synaptic complex, modulating synaptic transmission"/>
    <property type="evidence" value="ECO:0000314"/>
    <property type="project" value="SynGO"/>
</dbReference>
<dbReference type="FunFam" id="2.60.40.420:FF:000019">
    <property type="entry name" value="Putative ephrin-B3"/>
    <property type="match status" value="1"/>
</dbReference>
<dbReference type="Gene3D" id="2.60.40.420">
    <property type="entry name" value="Cupredoxins - blue copper proteins"/>
    <property type="match status" value="1"/>
</dbReference>
<dbReference type="InterPro" id="IPR008972">
    <property type="entry name" value="Cupredoxin"/>
</dbReference>
<dbReference type="InterPro" id="IPR031328">
    <property type="entry name" value="Ephrin"/>
</dbReference>
<dbReference type="InterPro" id="IPR019765">
    <property type="entry name" value="Ephrin_CS"/>
</dbReference>
<dbReference type="InterPro" id="IPR001799">
    <property type="entry name" value="Ephrin_RBD"/>
</dbReference>
<dbReference type="PANTHER" id="PTHR11304">
    <property type="entry name" value="EPHRIN"/>
    <property type="match status" value="1"/>
</dbReference>
<dbReference type="PANTHER" id="PTHR11304:SF34">
    <property type="entry name" value="EPHRIN-B3"/>
    <property type="match status" value="1"/>
</dbReference>
<dbReference type="Pfam" id="PF00812">
    <property type="entry name" value="Ephrin"/>
    <property type="match status" value="1"/>
</dbReference>
<dbReference type="PRINTS" id="PR01347">
    <property type="entry name" value="EPHRIN"/>
</dbReference>
<dbReference type="SUPFAM" id="SSF49503">
    <property type="entry name" value="Cupredoxins"/>
    <property type="match status" value="1"/>
</dbReference>
<dbReference type="PROSITE" id="PS01299">
    <property type="entry name" value="EPHRIN_RBD_1"/>
    <property type="match status" value="1"/>
</dbReference>
<dbReference type="PROSITE" id="PS51551">
    <property type="entry name" value="EPHRIN_RBD_2"/>
    <property type="match status" value="1"/>
</dbReference>
<evidence type="ECO:0000250" key="1"/>
<evidence type="ECO:0000250" key="2">
    <source>
        <dbReference type="UniProtKB" id="Q15768"/>
    </source>
</evidence>
<evidence type="ECO:0000255" key="3"/>
<evidence type="ECO:0000255" key="4">
    <source>
        <dbReference type="PROSITE-ProRule" id="PRU00884"/>
    </source>
</evidence>
<evidence type="ECO:0000256" key="5">
    <source>
        <dbReference type="SAM" id="MobiDB-lite"/>
    </source>
</evidence>
<evidence type="ECO:0000269" key="6">
    <source>
    </source>
</evidence>
<evidence type="ECO:0000269" key="7">
    <source>
    </source>
</evidence>
<evidence type="ECO:0000269" key="8">
    <source>
    </source>
</evidence>
<evidence type="ECO:0000269" key="9">
    <source>
    </source>
</evidence>
<evidence type="ECO:0007744" key="10">
    <source>
    </source>
</evidence>
<evidence type="ECO:0007829" key="11">
    <source>
        <dbReference type="PDB" id="3D12"/>
    </source>
</evidence>
<proteinExistence type="evidence at protein level"/>
<protein>
    <recommendedName>
        <fullName>Ephrin-B3</fullName>
    </recommendedName>
</protein>
<organism>
    <name type="scientific">Mus musculus</name>
    <name type="common">Mouse</name>
    <dbReference type="NCBI Taxonomy" id="10090"/>
    <lineage>
        <taxon>Eukaryota</taxon>
        <taxon>Metazoa</taxon>
        <taxon>Chordata</taxon>
        <taxon>Craniata</taxon>
        <taxon>Vertebrata</taxon>
        <taxon>Euteleostomi</taxon>
        <taxon>Mammalia</taxon>
        <taxon>Eutheria</taxon>
        <taxon>Euarchontoglires</taxon>
        <taxon>Glires</taxon>
        <taxon>Rodentia</taxon>
        <taxon>Myomorpha</taxon>
        <taxon>Muroidea</taxon>
        <taxon>Muridae</taxon>
        <taxon>Murinae</taxon>
        <taxon>Mus</taxon>
        <taxon>Mus</taxon>
    </lineage>
</organism>
<keyword id="KW-0002">3D-structure</keyword>
<keyword id="KW-0217">Developmental protein</keyword>
<keyword id="KW-0221">Differentiation</keyword>
<keyword id="KW-1015">Disulfide bond</keyword>
<keyword id="KW-0325">Glycoprotein</keyword>
<keyword id="KW-0472">Membrane</keyword>
<keyword id="KW-0488">Methylation</keyword>
<keyword id="KW-0524">Neurogenesis</keyword>
<keyword id="KW-0597">Phosphoprotein</keyword>
<keyword id="KW-1185">Reference proteome</keyword>
<keyword id="KW-0732">Signal</keyword>
<keyword id="KW-0812">Transmembrane</keyword>
<keyword id="KW-1133">Transmembrane helix</keyword>
<accession>O35393</accession>